<gene>
    <name type="ordered locus">Sez_1643</name>
</gene>
<feature type="chain" id="PRO_1000187922" description="Tyrosine recombinase XerD-like">
    <location>
        <begin position="1"/>
        <end position="248"/>
    </location>
</feature>
<feature type="domain" description="Core-binding (CB)" evidence="3">
    <location>
        <begin position="1"/>
        <end position="72"/>
    </location>
</feature>
<feature type="domain" description="Tyr recombinase" evidence="2">
    <location>
        <begin position="92"/>
        <end position="248"/>
    </location>
</feature>
<feature type="active site" evidence="2">
    <location>
        <position position="213"/>
    </location>
</feature>
<feature type="active site" description="O-(3'-phospho-DNA)-tyrosine intermediate" evidence="2">
    <location>
        <position position="245"/>
    </location>
</feature>
<accession>B4U4Q7</accession>
<proteinExistence type="inferred from homology"/>
<sequence>MIAFIEPFLASKSLANNSQQSYRYDLRQFCQQVGQRINPETLALYQQSLSGLTVAAKKRKLSTVNQFLYYLYQQRVLADYFKMDDRIEASFSLKPQLTRLDTSAFYAETAFLKGQLIALLILELGLTPSEIAGLRLADFDLGLQVLRLQSHRGIRVMTLSRTLLPFLERAAEAQQLYLFDHDAKPFSRQWFFNQLRDFLESIGCAELSAQSLREQFILNEKAAGKSIIEVAQLLGLKSPITLEKYYKM</sequence>
<keyword id="KW-0963">Cytoplasm</keyword>
<keyword id="KW-0229">DNA integration</keyword>
<keyword id="KW-0233">DNA recombination</keyword>
<keyword id="KW-0238">DNA-binding</keyword>
<protein>
    <recommendedName>
        <fullName evidence="1">Tyrosine recombinase XerD-like</fullName>
    </recommendedName>
</protein>
<name>XERDL_STREM</name>
<comment type="function">
    <text evidence="1">Putative tyrosine recombinase. Not involved in the cutting and rejoining of the recombining DNA molecules on dif(SL) site.</text>
</comment>
<comment type="subcellular location">
    <subcellularLocation>
        <location evidence="1">Cytoplasm</location>
    </subcellularLocation>
</comment>
<comment type="similarity">
    <text evidence="1">Belongs to the 'phage' integrase family. XerD-like subfamily.</text>
</comment>
<organism>
    <name type="scientific">Streptococcus equi subsp. zooepidemicus (strain MGCS10565)</name>
    <dbReference type="NCBI Taxonomy" id="552526"/>
    <lineage>
        <taxon>Bacteria</taxon>
        <taxon>Bacillati</taxon>
        <taxon>Bacillota</taxon>
        <taxon>Bacilli</taxon>
        <taxon>Lactobacillales</taxon>
        <taxon>Streptococcaceae</taxon>
        <taxon>Streptococcus</taxon>
    </lineage>
</organism>
<dbReference type="EMBL" id="CP001129">
    <property type="protein sequence ID" value="ACG62974.1"/>
    <property type="molecule type" value="Genomic_DNA"/>
</dbReference>
<dbReference type="SMR" id="B4U4Q7"/>
<dbReference type="KEGG" id="sez:Sez_1643"/>
<dbReference type="HOGENOM" id="CLU_1128554_0_0_9"/>
<dbReference type="Proteomes" id="UP000001873">
    <property type="component" value="Chromosome"/>
</dbReference>
<dbReference type="GO" id="GO:0005737">
    <property type="term" value="C:cytoplasm"/>
    <property type="evidence" value="ECO:0007669"/>
    <property type="project" value="UniProtKB-SubCell"/>
</dbReference>
<dbReference type="GO" id="GO:0003677">
    <property type="term" value="F:DNA binding"/>
    <property type="evidence" value="ECO:0007669"/>
    <property type="project" value="UniProtKB-KW"/>
</dbReference>
<dbReference type="GO" id="GO:0009037">
    <property type="term" value="F:tyrosine-based site-specific recombinase activity"/>
    <property type="evidence" value="ECO:0007669"/>
    <property type="project" value="UniProtKB-UniRule"/>
</dbReference>
<dbReference type="GO" id="GO:0006313">
    <property type="term" value="P:DNA transposition"/>
    <property type="evidence" value="ECO:0007669"/>
    <property type="project" value="UniProtKB-UniRule"/>
</dbReference>
<dbReference type="CDD" id="cd01190">
    <property type="entry name" value="INT_StrepXerD_C_like"/>
    <property type="match status" value="1"/>
</dbReference>
<dbReference type="Gene3D" id="1.10.150.130">
    <property type="match status" value="1"/>
</dbReference>
<dbReference type="Gene3D" id="1.10.443.10">
    <property type="entry name" value="Intergrase catalytic core"/>
    <property type="match status" value="1"/>
</dbReference>
<dbReference type="HAMAP" id="MF_01817">
    <property type="entry name" value="Recomb_XerD_like"/>
    <property type="match status" value="1"/>
</dbReference>
<dbReference type="InterPro" id="IPR044068">
    <property type="entry name" value="CB"/>
</dbReference>
<dbReference type="InterPro" id="IPR011010">
    <property type="entry name" value="DNA_brk_join_enz"/>
</dbReference>
<dbReference type="InterPro" id="IPR013762">
    <property type="entry name" value="Integrase-like_cat_sf"/>
</dbReference>
<dbReference type="InterPro" id="IPR002104">
    <property type="entry name" value="Integrase_catalytic"/>
</dbReference>
<dbReference type="InterPro" id="IPR010998">
    <property type="entry name" value="Integrase_recombinase_N"/>
</dbReference>
<dbReference type="InterPro" id="IPR020876">
    <property type="entry name" value="Tyrosine_recombinase_XerD-like"/>
</dbReference>
<dbReference type="NCBIfam" id="NF002685">
    <property type="entry name" value="PRK02436.1"/>
    <property type="match status" value="1"/>
</dbReference>
<dbReference type="SUPFAM" id="SSF56349">
    <property type="entry name" value="DNA breaking-rejoining enzymes"/>
    <property type="match status" value="1"/>
</dbReference>
<dbReference type="SUPFAM" id="SSF47823">
    <property type="entry name" value="lambda integrase-like, N-terminal domain"/>
    <property type="match status" value="1"/>
</dbReference>
<dbReference type="PROSITE" id="PS51900">
    <property type="entry name" value="CB"/>
    <property type="match status" value="1"/>
</dbReference>
<dbReference type="PROSITE" id="PS51898">
    <property type="entry name" value="TYR_RECOMBINASE"/>
    <property type="match status" value="1"/>
</dbReference>
<reference key="1">
    <citation type="journal article" date="2008" name="PLoS ONE">
        <title>Genome sequence of a lancefield group C Streptococcus zooepidemicus strain causing epidemic nephritis: new information about an old disease.</title>
        <authorList>
            <person name="Beres S.B."/>
            <person name="Sesso R."/>
            <person name="Pinto S.W.L."/>
            <person name="Hoe N.P."/>
            <person name="Porcella S.F."/>
            <person name="Deleo F.R."/>
            <person name="Musser J.M."/>
        </authorList>
    </citation>
    <scope>NUCLEOTIDE SEQUENCE [LARGE SCALE GENOMIC DNA]</scope>
    <source>
        <strain>MGCS10565</strain>
    </source>
</reference>
<evidence type="ECO:0000255" key="1">
    <source>
        <dbReference type="HAMAP-Rule" id="MF_01817"/>
    </source>
</evidence>
<evidence type="ECO:0000255" key="2">
    <source>
        <dbReference type="PROSITE-ProRule" id="PRU01246"/>
    </source>
</evidence>
<evidence type="ECO:0000255" key="3">
    <source>
        <dbReference type="PROSITE-ProRule" id="PRU01248"/>
    </source>
</evidence>